<keyword id="KW-0030">Aminoacyl-tRNA synthetase</keyword>
<keyword id="KW-0067">ATP-binding</keyword>
<keyword id="KW-0963">Cytoplasm</keyword>
<keyword id="KW-0436">Ligase</keyword>
<keyword id="KW-0547">Nucleotide-binding</keyword>
<keyword id="KW-0648">Protein biosynthesis</keyword>
<keyword id="KW-0694">RNA-binding</keyword>
<organism>
    <name type="scientific">Streptococcus suis (strain 98HAH33)</name>
    <dbReference type="NCBI Taxonomy" id="391296"/>
    <lineage>
        <taxon>Bacteria</taxon>
        <taxon>Bacillati</taxon>
        <taxon>Bacillota</taxon>
        <taxon>Bacilli</taxon>
        <taxon>Lactobacillales</taxon>
        <taxon>Streptococcaceae</taxon>
        <taxon>Streptococcus</taxon>
    </lineage>
</organism>
<dbReference type="EC" id="6.1.1.1" evidence="1"/>
<dbReference type="EMBL" id="CP000408">
    <property type="protein sequence ID" value="ABP91280.1"/>
    <property type="molecule type" value="Genomic_DNA"/>
</dbReference>
<dbReference type="SMR" id="A4VYU1"/>
<dbReference type="KEGG" id="ssv:SSU98_0120"/>
<dbReference type="HOGENOM" id="CLU_024003_0_3_9"/>
<dbReference type="GO" id="GO:0005829">
    <property type="term" value="C:cytosol"/>
    <property type="evidence" value="ECO:0007669"/>
    <property type="project" value="TreeGrafter"/>
</dbReference>
<dbReference type="GO" id="GO:0005524">
    <property type="term" value="F:ATP binding"/>
    <property type="evidence" value="ECO:0007669"/>
    <property type="project" value="UniProtKB-UniRule"/>
</dbReference>
<dbReference type="GO" id="GO:0003723">
    <property type="term" value="F:RNA binding"/>
    <property type="evidence" value="ECO:0007669"/>
    <property type="project" value="UniProtKB-KW"/>
</dbReference>
<dbReference type="GO" id="GO:0004831">
    <property type="term" value="F:tyrosine-tRNA ligase activity"/>
    <property type="evidence" value="ECO:0007669"/>
    <property type="project" value="UniProtKB-UniRule"/>
</dbReference>
<dbReference type="GO" id="GO:0006437">
    <property type="term" value="P:tyrosyl-tRNA aminoacylation"/>
    <property type="evidence" value="ECO:0007669"/>
    <property type="project" value="UniProtKB-UniRule"/>
</dbReference>
<dbReference type="CDD" id="cd00165">
    <property type="entry name" value="S4"/>
    <property type="match status" value="1"/>
</dbReference>
<dbReference type="CDD" id="cd00805">
    <property type="entry name" value="TyrRS_core"/>
    <property type="match status" value="1"/>
</dbReference>
<dbReference type="FunFam" id="1.10.240.10:FF:000001">
    <property type="entry name" value="Tyrosine--tRNA ligase"/>
    <property type="match status" value="1"/>
</dbReference>
<dbReference type="FunFam" id="3.40.50.620:FF:000008">
    <property type="entry name" value="Tyrosine--tRNA ligase"/>
    <property type="match status" value="1"/>
</dbReference>
<dbReference type="Gene3D" id="3.40.50.620">
    <property type="entry name" value="HUPs"/>
    <property type="match status" value="1"/>
</dbReference>
<dbReference type="Gene3D" id="3.10.290.10">
    <property type="entry name" value="RNA-binding S4 domain"/>
    <property type="match status" value="1"/>
</dbReference>
<dbReference type="Gene3D" id="1.10.240.10">
    <property type="entry name" value="Tyrosyl-Transfer RNA Synthetase"/>
    <property type="match status" value="1"/>
</dbReference>
<dbReference type="HAMAP" id="MF_02006">
    <property type="entry name" value="Tyr_tRNA_synth_type1"/>
    <property type="match status" value="1"/>
</dbReference>
<dbReference type="InterPro" id="IPR001412">
    <property type="entry name" value="aa-tRNA-synth_I_CS"/>
</dbReference>
<dbReference type="InterPro" id="IPR002305">
    <property type="entry name" value="aa-tRNA-synth_Ic"/>
</dbReference>
<dbReference type="InterPro" id="IPR014729">
    <property type="entry name" value="Rossmann-like_a/b/a_fold"/>
</dbReference>
<dbReference type="InterPro" id="IPR002942">
    <property type="entry name" value="S4_RNA-bd"/>
</dbReference>
<dbReference type="InterPro" id="IPR036986">
    <property type="entry name" value="S4_RNA-bd_sf"/>
</dbReference>
<dbReference type="InterPro" id="IPR054608">
    <property type="entry name" value="SYY-like_C"/>
</dbReference>
<dbReference type="InterPro" id="IPR002307">
    <property type="entry name" value="Tyr-tRNA-ligase"/>
</dbReference>
<dbReference type="InterPro" id="IPR024088">
    <property type="entry name" value="Tyr-tRNA-ligase_bac-type"/>
</dbReference>
<dbReference type="InterPro" id="IPR024107">
    <property type="entry name" value="Tyr-tRNA-ligase_bac_1"/>
</dbReference>
<dbReference type="NCBIfam" id="TIGR00234">
    <property type="entry name" value="tyrS"/>
    <property type="match status" value="1"/>
</dbReference>
<dbReference type="PANTHER" id="PTHR11766:SF0">
    <property type="entry name" value="TYROSINE--TRNA LIGASE, MITOCHONDRIAL"/>
    <property type="match status" value="1"/>
</dbReference>
<dbReference type="PANTHER" id="PTHR11766">
    <property type="entry name" value="TYROSYL-TRNA SYNTHETASE"/>
    <property type="match status" value="1"/>
</dbReference>
<dbReference type="Pfam" id="PF22421">
    <property type="entry name" value="SYY_C-terminal"/>
    <property type="match status" value="1"/>
</dbReference>
<dbReference type="Pfam" id="PF00579">
    <property type="entry name" value="tRNA-synt_1b"/>
    <property type="match status" value="1"/>
</dbReference>
<dbReference type="PRINTS" id="PR01040">
    <property type="entry name" value="TRNASYNTHTYR"/>
</dbReference>
<dbReference type="SMART" id="SM00363">
    <property type="entry name" value="S4"/>
    <property type="match status" value="1"/>
</dbReference>
<dbReference type="SUPFAM" id="SSF55174">
    <property type="entry name" value="Alpha-L RNA-binding motif"/>
    <property type="match status" value="1"/>
</dbReference>
<dbReference type="SUPFAM" id="SSF52374">
    <property type="entry name" value="Nucleotidylyl transferase"/>
    <property type="match status" value="1"/>
</dbReference>
<dbReference type="PROSITE" id="PS00178">
    <property type="entry name" value="AA_TRNA_LIGASE_I"/>
    <property type="match status" value="1"/>
</dbReference>
<dbReference type="PROSITE" id="PS50889">
    <property type="entry name" value="S4"/>
    <property type="match status" value="1"/>
</dbReference>
<proteinExistence type="inferred from homology"/>
<feature type="chain" id="PRO_1000088639" description="Tyrosine--tRNA ligase">
    <location>
        <begin position="1"/>
        <end position="418"/>
    </location>
</feature>
<feature type="domain" description="S4 RNA-binding" evidence="1">
    <location>
        <begin position="352"/>
        <end position="410"/>
    </location>
</feature>
<feature type="short sequence motif" description="'HIGH' region">
    <location>
        <begin position="39"/>
        <end position="48"/>
    </location>
</feature>
<feature type="short sequence motif" description="'KMSKS' region">
    <location>
        <begin position="229"/>
        <end position="233"/>
    </location>
</feature>
<feature type="binding site" evidence="1">
    <location>
        <position position="34"/>
    </location>
    <ligand>
        <name>L-tyrosine</name>
        <dbReference type="ChEBI" id="CHEBI:58315"/>
    </ligand>
</feature>
<feature type="binding site" evidence="1">
    <location>
        <position position="169"/>
    </location>
    <ligand>
        <name>L-tyrosine</name>
        <dbReference type="ChEBI" id="CHEBI:58315"/>
    </ligand>
</feature>
<feature type="binding site" evidence="1">
    <location>
        <position position="173"/>
    </location>
    <ligand>
        <name>L-tyrosine</name>
        <dbReference type="ChEBI" id="CHEBI:58315"/>
    </ligand>
</feature>
<feature type="binding site" evidence="1">
    <location>
        <position position="232"/>
    </location>
    <ligand>
        <name>ATP</name>
        <dbReference type="ChEBI" id="CHEBI:30616"/>
    </ligand>
</feature>
<evidence type="ECO:0000255" key="1">
    <source>
        <dbReference type="HAMAP-Rule" id="MF_02006"/>
    </source>
</evidence>
<comment type="function">
    <text evidence="1">Catalyzes the attachment of tyrosine to tRNA(Tyr) in a two-step reaction: tyrosine is first activated by ATP to form Tyr-AMP and then transferred to the acceptor end of tRNA(Tyr).</text>
</comment>
<comment type="catalytic activity">
    <reaction evidence="1">
        <text>tRNA(Tyr) + L-tyrosine + ATP = L-tyrosyl-tRNA(Tyr) + AMP + diphosphate + H(+)</text>
        <dbReference type="Rhea" id="RHEA:10220"/>
        <dbReference type="Rhea" id="RHEA-COMP:9706"/>
        <dbReference type="Rhea" id="RHEA-COMP:9707"/>
        <dbReference type="ChEBI" id="CHEBI:15378"/>
        <dbReference type="ChEBI" id="CHEBI:30616"/>
        <dbReference type="ChEBI" id="CHEBI:33019"/>
        <dbReference type="ChEBI" id="CHEBI:58315"/>
        <dbReference type="ChEBI" id="CHEBI:78442"/>
        <dbReference type="ChEBI" id="CHEBI:78536"/>
        <dbReference type="ChEBI" id="CHEBI:456215"/>
        <dbReference type="EC" id="6.1.1.1"/>
    </reaction>
</comment>
<comment type="subunit">
    <text evidence="1">Homodimer.</text>
</comment>
<comment type="subcellular location">
    <subcellularLocation>
        <location evidence="1">Cytoplasm</location>
    </subcellularLocation>
</comment>
<comment type="similarity">
    <text evidence="1">Belongs to the class-I aminoacyl-tRNA synthetase family. TyrS type 1 subfamily.</text>
</comment>
<name>SYY_STRS2</name>
<protein>
    <recommendedName>
        <fullName evidence="1">Tyrosine--tRNA ligase</fullName>
        <ecNumber evidence="1">6.1.1.1</ecNumber>
    </recommendedName>
    <alternativeName>
        <fullName evidence="1">Tyrosyl-tRNA synthetase</fullName>
        <shortName evidence="1">TyrRS</shortName>
    </alternativeName>
</protein>
<gene>
    <name evidence="1" type="primary">tyrS</name>
    <name type="ordered locus">SSU98_0120</name>
</gene>
<reference key="1">
    <citation type="journal article" date="2007" name="PLoS ONE">
        <title>A glimpse of streptococcal toxic shock syndrome from comparative genomics of S. suis 2 Chinese isolates.</title>
        <authorList>
            <person name="Chen C."/>
            <person name="Tang J."/>
            <person name="Dong W."/>
            <person name="Wang C."/>
            <person name="Feng Y."/>
            <person name="Wang J."/>
            <person name="Zheng F."/>
            <person name="Pan X."/>
            <person name="Liu D."/>
            <person name="Li M."/>
            <person name="Song Y."/>
            <person name="Zhu X."/>
            <person name="Sun H."/>
            <person name="Feng T."/>
            <person name="Guo Z."/>
            <person name="Ju A."/>
            <person name="Ge J."/>
            <person name="Dong Y."/>
            <person name="Sun W."/>
            <person name="Jiang Y."/>
            <person name="Wang J."/>
            <person name="Yan J."/>
            <person name="Yang H."/>
            <person name="Wang X."/>
            <person name="Gao G.F."/>
            <person name="Yang R."/>
            <person name="Wang J."/>
            <person name="Yu J."/>
        </authorList>
    </citation>
    <scope>NUCLEOTIDE SEQUENCE [LARGE SCALE GENOMIC DNA]</scope>
    <source>
        <strain>98HAH33</strain>
    </source>
</reference>
<sequence>MNIFEELKARGLVFQTTDEEALVKALTEGQVSYYTGYDPTADSLHLGHLVAILTSRRLQLAGHKPYALVGGATGLIGDPSFKDAERSLQTKDTVDGWVTKIQGQLSRFLDFENGDNKAEMVNNYDWFSDISFIDFLRDVGKYYTVNYMMSKDSVKKRIETGISYTEFAYQIMQGYDFYELNDKHNVTLQIGGSDQWGNMTAGTELLRRKADKSGHVMTVPLITDSTGKKFGKSEGNAVWLDADKTSPYEMYQFWLNVMDDDAVRFLKIFTFLSLDEIAEIEKQFDAARHERLAQKILAKEVVTLVHGEEAYNQALNITEQLFAGNIKNLSAKELKQGLSNVPNYAVQAEDNLNIVELLVTSGIVNSKRQAREDVQNGAIYVNGERVQDLDYTLSDSDKIDGELTVIRRGKKKYSVLTY</sequence>
<accession>A4VYU1</accession>